<reference key="1">
    <citation type="journal article" date="1993" name="Mol. Microbiol.">
        <title>The essential Escherichia coli msbA gene, a multicopy suppressor of null mutations in the htrB gene, is related to the universally conserved family of ATP-dependent translocators.</title>
        <authorList>
            <person name="Karow M.L."/>
            <person name="Georgopoulos C."/>
        </authorList>
    </citation>
    <scope>NUCLEOTIDE SEQUENCE [GENOMIC DNA]</scope>
    <source>
        <strain>K12</strain>
    </source>
</reference>
<reference key="2">
    <citation type="journal article" date="1996" name="DNA Res.">
        <title>A 718-kb DNA sequence of the Escherichia coli K-12 genome corresponding to the 12.7-28.0 min region on the linkage map.</title>
        <authorList>
            <person name="Oshima T."/>
            <person name="Aiba H."/>
            <person name="Baba T."/>
            <person name="Fujita K."/>
            <person name="Hayashi K."/>
            <person name="Honjo A."/>
            <person name="Ikemoto K."/>
            <person name="Inada T."/>
            <person name="Itoh T."/>
            <person name="Kajihara M."/>
            <person name="Kanai K."/>
            <person name="Kashimoto K."/>
            <person name="Kimura S."/>
            <person name="Kitagawa M."/>
            <person name="Makino K."/>
            <person name="Masuda S."/>
            <person name="Miki T."/>
            <person name="Mizobuchi K."/>
            <person name="Mori H."/>
            <person name="Motomura K."/>
            <person name="Nakamura Y."/>
            <person name="Nashimoto H."/>
            <person name="Nishio Y."/>
            <person name="Saito N."/>
            <person name="Sampei G."/>
            <person name="Seki Y."/>
            <person name="Tagami H."/>
            <person name="Takemoto K."/>
            <person name="Wada C."/>
            <person name="Yamamoto Y."/>
            <person name="Yano M."/>
            <person name="Horiuchi T."/>
        </authorList>
    </citation>
    <scope>NUCLEOTIDE SEQUENCE [LARGE SCALE GENOMIC DNA]</scope>
    <source>
        <strain>K12 / W3110 / ATCC 27325 / DSM 5911</strain>
    </source>
</reference>
<reference key="3">
    <citation type="journal article" date="1997" name="Science">
        <title>The complete genome sequence of Escherichia coli K-12.</title>
        <authorList>
            <person name="Blattner F.R."/>
            <person name="Plunkett G. III"/>
            <person name="Bloch C.A."/>
            <person name="Perna N.T."/>
            <person name="Burland V."/>
            <person name="Riley M."/>
            <person name="Collado-Vides J."/>
            <person name="Glasner J.D."/>
            <person name="Rode C.K."/>
            <person name="Mayhew G.F."/>
            <person name="Gregor J."/>
            <person name="Davis N.W."/>
            <person name="Kirkpatrick H.A."/>
            <person name="Goeden M.A."/>
            <person name="Rose D.J."/>
            <person name="Mau B."/>
            <person name="Shao Y."/>
        </authorList>
    </citation>
    <scope>NUCLEOTIDE SEQUENCE [LARGE SCALE GENOMIC DNA]</scope>
    <source>
        <strain>K12 / MG1655 / ATCC 47076</strain>
    </source>
</reference>
<reference key="4">
    <citation type="journal article" date="2006" name="Mol. Syst. Biol.">
        <title>Highly accurate genome sequences of Escherichia coli K-12 strains MG1655 and W3110.</title>
        <authorList>
            <person name="Hayashi K."/>
            <person name="Morooka N."/>
            <person name="Yamamoto Y."/>
            <person name="Fujita K."/>
            <person name="Isono K."/>
            <person name="Choi S."/>
            <person name="Ohtsubo E."/>
            <person name="Baba T."/>
            <person name="Wanner B.L."/>
            <person name="Mori H."/>
            <person name="Horiuchi T."/>
        </authorList>
    </citation>
    <scope>NUCLEOTIDE SEQUENCE [LARGE SCALE GENOMIC DNA]</scope>
    <source>
        <strain>K12 / W3110 / ATCC 27325 / DSM 5911</strain>
    </source>
</reference>
<reference key="5">
    <citation type="journal article" date="1996" name="Mol. Microbiol.">
        <title>Mutational analysis and properties of the msbA gene of Escherichia coli, coding for an essential ABC family transporter.</title>
        <authorList>
            <person name="Polissi A."/>
            <person name="Georgopoulos C."/>
        </authorList>
    </citation>
    <scope>FUNCTION</scope>
    <scope>SUBCELLULAR LOCATION</scope>
    <scope>MUTAGENESIS OF LEU-511 AND ASP-512</scope>
</reference>
<reference key="6">
    <citation type="journal article" date="1998" name="J. Biol. Chem.">
        <title>Function of Escherichia coli MsbA, an essential ABC family transporter, in lipid A and phospholipid biosynthesis.</title>
        <authorList>
            <person name="Zhou Z."/>
            <person name="White K.A."/>
            <person name="Polissi A."/>
            <person name="Georgopoulos C."/>
            <person name="Raetz C.R.H."/>
        </authorList>
    </citation>
    <scope>FUNCTION IN TRANSPORT</scope>
    <scope>DISRUPTION PHENOTYPE</scope>
    <source>
        <strain>K12 / W3110 / ATCC 27325 / DSM 5911</strain>
    </source>
</reference>
<reference key="7">
    <citation type="journal article" date="2001" name="J. Biol. Chem.">
        <title>An Escherichia coli mutant defective in lipid export.</title>
        <authorList>
            <person name="Doerrler W.T."/>
            <person name="Reedy M.C."/>
            <person name="Raetz C.R.H."/>
        </authorList>
    </citation>
    <scope>MUTAGENESIS OF ALA-270</scope>
    <source>
        <strain>LBC273</strain>
    </source>
</reference>
<reference key="8">
    <citation type="journal article" date="2002" name="J. Biol. Chem.">
        <title>ATPase activity of the MsbA lipid flippase of Escherichia coli.</title>
        <authorList>
            <person name="Doerrler W.T."/>
            <person name="Raetz C.R.H."/>
        </authorList>
    </citation>
    <scope>FUNCTION</scope>
    <scope>ATPASE ACTIVITY</scope>
    <scope>BIOPHYSICOCHEMICAL PROPERTIES</scope>
    <scope>ACTIVITY REGULATION</scope>
    <scope>SUBCELLULAR LOCATION</scope>
    <scope>MUTAGENESIS OF ALA-270</scope>
    <source>
        <strain>K12 / W3110 / ATCC 27325 / DSM 5911</strain>
    </source>
</reference>
<reference key="9">
    <citation type="journal article" date="2004" name="J. Biol. Chem.">
        <title>MsbA-dependent translocation of lipids across the inner membrane of Escherichia coli.</title>
        <authorList>
            <person name="Doerrler W.T."/>
            <person name="Gibbons H.S."/>
            <person name="Raetz C.R."/>
        </authorList>
    </citation>
    <scope>FUNCTION</scope>
    <scope>CATALYTIC ACTIVITY</scope>
</reference>
<reference key="10">
    <citation type="journal article" date="2005" name="Science">
        <title>Global topology analysis of the Escherichia coli inner membrane proteome.</title>
        <authorList>
            <person name="Daley D.O."/>
            <person name="Rapp M."/>
            <person name="Granseth E."/>
            <person name="Melen K."/>
            <person name="Drew D."/>
            <person name="von Heijne G."/>
        </authorList>
    </citation>
    <scope>SUBCELLULAR LOCATION</scope>
    <source>
        <strain>K12 / MG1655 / ATCC 47076</strain>
    </source>
</reference>
<reference key="11">
    <citation type="journal article" date="2001" name="Science">
        <title>Structure of MsbA from E. coli: a homolog of the multidrug resistance ATP binding cassette (ABC) transporters.</title>
        <authorList>
            <person name="Chang G."/>
            <person name="Roth C.B."/>
        </authorList>
    </citation>
    <scope>RETRACTED PAPER</scope>
</reference>
<reference key="12">
    <citation type="journal article" date="2006" name="Science">
        <authorList>
            <person name="Chang G."/>
            <person name="Roth C.B."/>
            <person name="Reyes C.L."/>
            <person name="Pornillos O."/>
            <person name="Chen Y.J."/>
            <person name="Chen A.P."/>
        </authorList>
    </citation>
    <scope>RETRACTION NOTICE OF PUBMED:11546864</scope>
</reference>
<reference key="13">
    <citation type="journal article" date="2007" name="PLoS Biol.">
        <title>Conformational motion of the ABC transporter MsbA induced by ATP hydrolysis.</title>
        <authorList>
            <person name="Borbat P.P."/>
            <person name="Surendhran K."/>
            <person name="Bortolus M."/>
            <person name="Zou P."/>
            <person name="Freed J.H."/>
            <person name="Mchaourab H.S."/>
        </authorList>
    </citation>
    <scope>SUBUNIT</scope>
    <scope>DOMAIN</scope>
</reference>
<reference key="14">
    <citation type="journal article" date="2008" name="J. Biol. Chem.">
        <title>Functional characterization of Escherichia coli MsbA: interaction with nucleotides and substrates.</title>
        <authorList>
            <person name="Eckford P.D."/>
            <person name="Sharom F.J."/>
        </authorList>
    </citation>
    <scope>FUNCTION</scope>
    <scope>ATPASE ACTIVITY</scope>
    <scope>ACTIVITY REGULATION</scope>
    <scope>SUBUNIT</scope>
    <scope>DOMAIN</scope>
</reference>
<reference key="15">
    <citation type="journal article" date="2009" name="Biochem. J.">
        <title>The ABC transporter MsbA interacts with lipid A and amphipathic drugs at different sites.</title>
        <authorList>
            <person name="Siarheyeva A."/>
            <person name="Sharom F.J."/>
        </authorList>
    </citation>
    <scope>FUNCTION</scope>
    <scope>ATPASE ACTIVITY</scope>
    <scope>SUBUNIT</scope>
    <scope>DOMAIN</scope>
    <scope>MUTAGENESIS OF CYS-88 AND CYS-315</scope>
</reference>
<reference key="16">
    <citation type="journal article" date="2010" name="Biochem. J.">
        <title>The reconstituted Escherichia coli MsbA protein displays lipid flippase activity.</title>
        <authorList>
            <person name="Eckford P.D."/>
            <person name="Sharom F.J."/>
        </authorList>
    </citation>
    <scope>FUNCTION</scope>
    <scope>CATALYTIC ACTIVITY</scope>
</reference>
<reference key="17">
    <citation type="journal article" date="2010" name="Proteins">
        <title>Dissection of the conformational cycle of the multidrug/lipid A ABC exporter MsbA.</title>
        <authorList>
            <person name="Doshi R."/>
            <person name="Woebking B."/>
            <person name="van Veen H.W."/>
        </authorList>
    </citation>
    <scope>DOMAIN</scope>
    <scope>MUTAGENESIS OF GLU-208</scope>
</reference>
<reference key="18">
    <citation type="journal article" date="2011" name="Biochemistry">
        <title>Characterization of the E506Q and H537A dysfunctional mutants in the E. coli ABC transporter MsbA.</title>
        <authorList>
            <person name="Schultz K.M."/>
            <person name="Merten J.A."/>
            <person name="Klug C.S."/>
        </authorList>
    </citation>
    <scope>ATPASE ACTIVITY</scope>
    <scope>BIOPHYSICOCHEMICAL PROPERTIES</scope>
    <scope>MUTAGENESIS OF GLU-506 AND HIS-537</scope>
</reference>
<reference key="19">
    <citation type="journal article" date="2013" name="J. Biol. Chem.">
        <title>Molecular disruption of the power stroke in the ATP-binding cassette transport protein MsbA.</title>
        <authorList>
            <person name="Doshi R."/>
            <person name="Ali A."/>
            <person name="Shi W."/>
            <person name="Freeman E.V."/>
            <person name="Fagg L.A."/>
            <person name="van Veen H.W."/>
        </authorList>
    </citation>
    <scope>DOMAIN</scope>
    <scope>MUTAGENESIS OF GLU-208 AND LYS-212</scope>
</reference>
<reference key="20">
    <citation type="journal article" date="2013" name="J. Biol. Chem.">
        <title>Substrate binding stabilizes a pre-translocation intermediate in the ATP-binding cassette transport protein MsbA.</title>
        <authorList>
            <person name="Doshi R."/>
            <person name="van Veen H.W."/>
        </authorList>
    </citation>
    <scope>DOMAIN</scope>
</reference>
<reference key="21">
    <citation type="journal article" date="2016" name="Nat. Commun.">
        <title>ATP-dependent substrate transport by the ABC transporter MsbA is proton-coupled.</title>
        <authorList>
            <person name="Singh H."/>
            <person name="Velamakanni S."/>
            <person name="Deery M.J."/>
            <person name="Howard J."/>
            <person name="Wei S.L."/>
            <person name="van Veen H.W."/>
        </authorList>
    </citation>
    <scope>PROTON-COUPLED EFFLUX</scope>
</reference>
<reference key="22">
    <citation type="journal article" date="2018" name="Antimicrob. Agents Chemother.">
        <title>Disrupting Gram-negative bacterial outer membrane biosynthesis through inhibition of the lipopolysaccharide transporter MsbA.</title>
        <authorList>
            <person name="Alexander M.K."/>
            <person name="Miu A."/>
            <person name="Oh A."/>
            <person name="Reichelt M."/>
            <person name="Ho H."/>
            <person name="Chalouni C."/>
            <person name="Labadie S."/>
            <person name="Wang L."/>
            <person name="Liang J."/>
            <person name="Nickerson N.N."/>
            <person name="Hu H."/>
            <person name="Yu L."/>
            <person name="Du M."/>
            <person name="Yan D."/>
            <person name="Park S."/>
            <person name="Kim J."/>
            <person name="Xu M."/>
            <person name="Sellers B.D."/>
            <person name="Purkey H.E."/>
            <person name="Skelton N.J."/>
            <person name="Koehler M.F.T."/>
            <person name="Payandeh J."/>
            <person name="Verma V."/>
            <person name="Xu Y."/>
            <person name="Koth C.M."/>
            <person name="Nishiyama M."/>
        </authorList>
    </citation>
    <scope>IDENTIFICATION AS A DRUG TARGET</scope>
</reference>
<reference evidence="23" key="23">
    <citation type="journal article" date="2007" name="Proc. Natl. Acad. Sci. U.S.A.">
        <title>Flexibility in the ABC transporter MsbA: Alternating access with a twist.</title>
        <authorList>
            <person name="Ward A."/>
            <person name="Reyes C.L."/>
            <person name="Yu J."/>
            <person name="Roth C.B."/>
            <person name="Chang G."/>
        </authorList>
    </citation>
    <scope>X-RAY CRYSTALLOGRAPHY (5.30 ANGSTROMS)</scope>
    <scope>SUBUNIT</scope>
    <scope>DOMAIN</scope>
</reference>
<reference key="24">
    <citation type="journal article" date="2017" name="Nature">
        <title>Structural basis of MsbA-mediated lipopolysaccharide transport.</title>
        <authorList>
            <person name="Mi W."/>
            <person name="Li Y."/>
            <person name="Yoon S.H."/>
            <person name="Ernst R.K."/>
            <person name="Walz T."/>
            <person name="Liao M."/>
        </authorList>
    </citation>
    <scope>STRUCTURE BY ELECTRON MICROSCOPY</scope>
    <scope>FUNCTION</scope>
    <scope>CATALYTIC ACTIVITY</scope>
    <scope>ACTIVITY REGULATION</scope>
    <scope>SUBUNIT</scope>
    <scope>DOMAIN</scope>
</reference>
<reference evidence="24 25" key="25">
    <citation type="journal article" date="2020" name="Elife">
        <title>New approach for membrane protein reconstitution into peptidiscs and basis for their adaptability to different proteins.</title>
        <authorList>
            <person name="Angiulli G."/>
            <person name="Dhupar H.S."/>
            <person name="Suzuki H."/>
            <person name="Wason I.S."/>
            <person name="Duong Van Hoa F."/>
            <person name="Walz T."/>
        </authorList>
    </citation>
    <scope>STRUCTURE BY ELECTRON MICROSCOPY (4.20 ANGSTROMS)</scope>
</reference>
<feature type="chain" id="PRO_0000092577" description="ATP-dependent lipid A-core flippase">
    <location>
        <begin position="1"/>
        <end position="582"/>
    </location>
</feature>
<feature type="transmembrane region" description="Helical" evidence="1">
    <location>
        <begin position="63"/>
        <end position="83"/>
    </location>
</feature>
<feature type="transmembrane region" description="Helical" evidence="1">
    <location>
        <begin position="140"/>
        <end position="162"/>
    </location>
</feature>
<feature type="transmembrane region" description="Helical" evidence="1">
    <location>
        <begin position="167"/>
        <end position="186"/>
    </location>
</feature>
<feature type="transmembrane region" description="Helical" evidence="1">
    <location>
        <begin position="253"/>
        <end position="273"/>
    </location>
</feature>
<feature type="transmembrane region" description="Helical" evidence="1">
    <location>
        <begin position="275"/>
        <end position="295"/>
    </location>
</feature>
<feature type="domain" description="ABC transmembrane type-1" evidence="1">
    <location>
        <begin position="27"/>
        <end position="310"/>
    </location>
</feature>
<feature type="domain" description="ABC transporter" evidence="1">
    <location>
        <begin position="342"/>
        <end position="578"/>
    </location>
</feature>
<feature type="binding site" evidence="1">
    <location>
        <begin position="376"/>
        <end position="383"/>
    </location>
    <ligand>
        <name>ATP</name>
        <dbReference type="ChEBI" id="CHEBI:30616"/>
    </ligand>
</feature>
<feature type="mutagenesis site" description="Does not affect ATPase activity." evidence="9">
    <original>C</original>
    <variation>S</variation>
    <location>
        <position position="88"/>
    </location>
</feature>
<feature type="mutagenesis site" description="Does not reduce substrate binding or nucleotide binding, but decreases ATP-dependent extrusion of substrates. Inhibits formation of outward-facing conformation." evidence="13">
    <original>E</original>
    <variation>A</variation>
    <location>
        <position position="208"/>
    </location>
</feature>
<feature type="mutagenesis site" description="Exhibits ATPase activity. Forms intermolecular cross-links." evidence="11">
    <original>E</original>
    <variation>C</variation>
    <location>
        <position position="208"/>
    </location>
</feature>
<feature type="mutagenesis site" description="Improves basal ATPase activity and increases transport activity." evidence="13">
    <original>E</original>
    <variation>Q</variation>
    <location>
        <position position="208"/>
    </location>
</feature>
<feature type="mutagenesis site" description="Does not reduce substrate binding or nucleotide binding, but decreases ATP-dependent extrusion of substrates." evidence="13">
    <original>K</original>
    <variation>A</variation>
    <location>
        <position position="212"/>
    </location>
</feature>
<feature type="mutagenesis site" description="Temperature-sensitive. Loss of lipid export to the outer membrane. Significantly decreases ATPase activity at 42 degrees Celsius but not at 30 degrees Celsius." evidence="2 3">
    <original>A</original>
    <variation>T</variation>
    <location>
        <position position="270"/>
    </location>
</feature>
<feature type="mutagenesis site" description="Does not affect ATPase activity." evidence="9">
    <original>C</original>
    <variation>S</variation>
    <location>
        <position position="315"/>
    </location>
</feature>
<feature type="mutagenesis site" description="Lacks cell viability and does not support growth. Can still bind ATP and slowly hydrolyze ATP, but becomes locked into a closed dimer conformation." evidence="12">
    <original>E</original>
    <variation>Q</variation>
    <location>
        <position position="506"/>
    </location>
</feature>
<feature type="mutagenesis site" description="Loss of ATPase activity; ATP is still bound." evidence="18">
    <original>L</original>
    <variation>P</variation>
    <location>
        <position position="511"/>
    </location>
</feature>
<feature type="mutagenesis site" description="Loss of ATPase activity; ATP is still bound." evidence="18">
    <original>D</original>
    <variation>G</variation>
    <location>
        <position position="512"/>
    </location>
</feature>
<feature type="mutagenesis site" description="Lacks cell viability and does not support growth. Can still bind ATP and slowly hydrolyze ATP, but becomes locked into a closed dimer conformation." evidence="12">
    <original>H</original>
    <variation>A</variation>
    <location>
        <position position="537"/>
    </location>
</feature>
<feature type="helix" evidence="28">
    <location>
        <begin position="11"/>
        <end position="16"/>
    </location>
</feature>
<feature type="helix" evidence="28">
    <location>
        <begin position="17"/>
        <end position="19"/>
    </location>
</feature>
<feature type="helix" evidence="28">
    <location>
        <begin position="21"/>
        <end position="23"/>
    </location>
</feature>
<feature type="helix" evidence="28">
    <location>
        <begin position="24"/>
        <end position="53"/>
    </location>
</feature>
<feature type="strand" evidence="27">
    <location>
        <begin position="56"/>
        <end position="59"/>
    </location>
</feature>
<feature type="helix" evidence="28">
    <location>
        <begin position="61"/>
        <end position="109"/>
    </location>
</feature>
<feature type="helix" evidence="28">
    <location>
        <begin position="113"/>
        <end position="116"/>
    </location>
</feature>
<feature type="helix" evidence="28">
    <location>
        <begin position="121"/>
        <end position="129"/>
    </location>
</feature>
<feature type="turn" evidence="28">
    <location>
        <begin position="130"/>
        <end position="132"/>
    </location>
</feature>
<feature type="helix" evidence="28">
    <location>
        <begin position="133"/>
        <end position="136"/>
    </location>
</feature>
<feature type="turn" evidence="28">
    <location>
        <begin position="137"/>
        <end position="140"/>
    </location>
</feature>
<feature type="helix" evidence="28">
    <location>
        <begin position="141"/>
        <end position="163"/>
    </location>
</feature>
<feature type="turn" evidence="28">
    <location>
        <begin position="165"/>
        <end position="168"/>
    </location>
</feature>
<feature type="helix" evidence="28">
    <location>
        <begin position="169"/>
        <end position="212"/>
    </location>
</feature>
<feature type="helix" evidence="28">
    <location>
        <begin position="214"/>
        <end position="219"/>
    </location>
</feature>
<feature type="helix" evidence="28">
    <location>
        <begin position="223"/>
        <end position="270"/>
    </location>
</feature>
<feature type="helix" evidence="28">
    <location>
        <begin position="274"/>
        <end position="277"/>
    </location>
</feature>
<feature type="turn" evidence="28">
    <location>
        <begin position="278"/>
        <end position="282"/>
    </location>
</feature>
<feature type="helix" evidence="28">
    <location>
        <begin position="283"/>
        <end position="322"/>
    </location>
</feature>
<feature type="strand" evidence="26">
    <location>
        <begin position="342"/>
        <end position="349"/>
    </location>
</feature>
<feature type="strand" evidence="26">
    <location>
        <begin position="358"/>
        <end position="366"/>
    </location>
</feature>
<feature type="strand" evidence="26">
    <location>
        <begin position="371"/>
        <end position="377"/>
    </location>
</feature>
<feature type="helix" evidence="26">
    <location>
        <begin position="382"/>
        <end position="387"/>
    </location>
</feature>
<feature type="helix" evidence="26">
    <location>
        <begin position="388"/>
        <end position="390"/>
    </location>
</feature>
<feature type="strand" evidence="26">
    <location>
        <begin position="396"/>
        <end position="402"/>
    </location>
</feature>
<feature type="helix" evidence="26">
    <location>
        <begin position="407"/>
        <end position="409"/>
    </location>
</feature>
<feature type="helix" evidence="26">
    <location>
        <begin position="412"/>
        <end position="418"/>
    </location>
</feature>
<feature type="strand" evidence="26">
    <location>
        <begin position="419"/>
        <end position="423"/>
    </location>
</feature>
<feature type="strand" evidence="26">
    <location>
        <begin position="430"/>
        <end position="432"/>
    </location>
</feature>
<feature type="helix" evidence="26">
    <location>
        <begin position="433"/>
        <end position="437"/>
    </location>
</feature>
<feature type="turn" evidence="28">
    <location>
        <begin position="438"/>
        <end position="440"/>
    </location>
</feature>
<feature type="strand" evidence="26">
    <location>
        <begin position="441"/>
        <end position="443"/>
    </location>
</feature>
<feature type="helix" evidence="26">
    <location>
        <begin position="447"/>
        <end position="456"/>
    </location>
</feature>
<feature type="helix" evidence="26">
    <location>
        <begin position="460"/>
        <end position="463"/>
    </location>
</feature>
<feature type="strand" evidence="28">
    <location>
        <begin position="466"/>
        <end position="468"/>
    </location>
</feature>
<feature type="helix" evidence="26">
    <location>
        <begin position="469"/>
        <end position="471"/>
    </location>
</feature>
<feature type="strand" evidence="26">
    <location>
        <begin position="473"/>
        <end position="476"/>
    </location>
</feature>
<feature type="helix" evidence="26">
    <location>
        <begin position="483"/>
        <end position="496"/>
    </location>
</feature>
<feature type="strand" evidence="26">
    <location>
        <begin position="500"/>
        <end position="505"/>
    </location>
</feature>
<feature type="turn" evidence="27">
    <location>
        <begin position="507"/>
        <end position="510"/>
    </location>
</feature>
<feature type="helix" evidence="26">
    <location>
        <begin position="514"/>
        <end position="527"/>
    </location>
</feature>
<feature type="strand" evidence="26">
    <location>
        <begin position="530"/>
        <end position="535"/>
    </location>
</feature>
<feature type="helix" evidence="26">
    <location>
        <begin position="539"/>
        <end position="543"/>
    </location>
</feature>
<feature type="strand" evidence="26">
    <location>
        <begin position="545"/>
        <end position="552"/>
    </location>
</feature>
<feature type="strand" evidence="26">
    <location>
        <begin position="555"/>
        <end position="560"/>
    </location>
</feature>
<feature type="helix" evidence="26">
    <location>
        <begin position="562"/>
        <end position="568"/>
    </location>
</feature>
<feature type="helix" evidence="26">
    <location>
        <begin position="571"/>
        <end position="578"/>
    </location>
</feature>
<comment type="function">
    <text evidence="3 4 7 8 9 10 12 16 18 19">Involved in lipopolysaccharide (LPS) biosynthesis. Translocates lipid A-core from the inner to the outer leaflet of the inner membrane (PubMed:12119303, PubMed:15304478, PubMed:28869968, PubMed:8809774, PubMed:9575204). Transmembrane domains (TMD) form a pore in the inner membrane and the ATP-binding domain (NBD) is responsible for energy generation (PubMed:12119303). Shows ATPase activity (PubMed:12119303, PubMed:18024585, PubMed:18344567, PubMed:19132955, PubMed:20412049, PubMed:21462989). May transport glycerophospholipids (PubMed:9575204). In proteoliposomes, mediates the ATP-dependent flipping of a variety of phospholipid and glycolipid derivatives (PubMed:20412049). May also function as a multidrug transporter (PubMed:19132955).</text>
</comment>
<comment type="catalytic activity">
    <reaction evidence="1 4 10 16">
        <text>ATP + H2O + lipid A-core oligosaccharideSide 1 = ADP + phosphate + lipid A-core oligosaccharideSide 2.</text>
        <dbReference type="EC" id="7.5.2.6"/>
    </reaction>
</comment>
<comment type="activity regulation">
    <text evidence="3 8 16">ATPase activity is stimulated by lipid A, hexaacylated lipid A or Kdo(2)-lipid A (PubMed:12119303, PubMed:18344567). Inhibited by the phosphate analog vanadate (PubMed:12119303, PubMed:18344567, PubMed:28869968). ATPase activity is also modulated by the lipid-based drugs D-20133 and D-21266, along with LY335979 and leupeptin (PubMed:18344567).</text>
</comment>
<comment type="biophysicochemical properties">
    <kinetics>
        <KM evidence="3">878 uM for ATP</KM>
        <KM evidence="12">117 uM for ATP</KM>
        <Vmax evidence="3">37.0 nmol/min/mg enzyme</Vmax>
        <Vmax evidence="12">68.0 nmol/min/mg enzyme</Vmax>
    </kinetics>
</comment>
<comment type="subunit">
    <text evidence="1 6 7 8 9 16">Homodimer.</text>
</comment>
<comment type="interaction">
    <interactant intactId="EBI-556367">
        <id>P60752</id>
    </interactant>
    <interactant intactId="EBI-556367">
        <id>P60752</id>
        <label>msbA</label>
    </interactant>
    <organismsDiffer>false</organismsDiffer>
    <experiments>4</experiments>
</comment>
<comment type="subcellular location">
    <subcellularLocation>
        <location evidence="1 3 5 18">Cell inner membrane</location>
        <topology evidence="1 18">Multi-pass membrane protein</topology>
    </subcellularLocation>
</comment>
<comment type="domain">
    <text evidence="6 7">In MsbA the ATP-binding domain (NBD) and the transmembrane domain (TMD) are fused.</text>
</comment>
<comment type="domain">
    <text evidence="6 7 8 11 13 14 16">Substrate binding induces conformational changes, NBD dimerization, and stabilizes an inward-facing closed pre-translocation state that binds ATP (PubMed:18344567, PubMed:23766512, PubMed:28869968). ATP binding fuels a relative motion of the NBD domains. The movement of the NBDs is coupled to reorientation of the chamber, which binds the lipid substrate, from cytoplasmic-facing to periplasmic-facing through large amplitude motion on either side of the transporter (PubMed:17927448, PubMed:18024585, PubMed:20715055, PubMed:28869968). ATP hydrolysis is then required to resolve the outward-facing conformation back to an inward-facing conformation (PubMed:23766512, PubMed:28869968). The ATP-dependent switch requires robust tetrahelix bundle interactions (PubMed:23306205).</text>
</comment>
<comment type="domain">
    <text evidence="9">Contains two substrate-binding sites that communicate with both the nucleotide-binding domain and with each other. One is a high affinity binding site for the physiological substrate, lipid A, and the other site interacts with drugs with comparable affinity.</text>
</comment>
<comment type="disruption phenotype">
    <text evidence="19">Absence of MsbA alone causes accumulation of hexa-acylated lipid A species and glycerophospholipids in the inner membrane.</text>
</comment>
<comment type="miscellaneous">
    <text evidence="15">In addition to ATP hydrolysis, may utilize another major energy currency in the cell by coupling substrate transport to a transmembrane electrochemical proton gradient (PubMed:27499013). In vitro, MsbA-mediated ethidium efflux is dependent on both the electrochemical proton gradient and ATP hydrolysis (PubMed:27499013).</text>
</comment>
<comment type="miscellaneous">
    <text evidence="17">Identified as a drug target. Inhibited by a series of quinoline compounds that kill E.coli through inhibition of ATPase and transport activity of MsbA.</text>
</comment>
<comment type="similarity">
    <text evidence="1">Belongs to the ABC transporter superfamily. Lipid exporter (TC 3.A.1.106) family.</text>
</comment>
<proteinExistence type="evidence at protein level"/>
<protein>
    <recommendedName>
        <fullName evidence="1 22">ATP-dependent lipid A-core flippase</fullName>
        <ecNumber evidence="1 4 10 16">7.5.2.6</ecNumber>
    </recommendedName>
    <alternativeName>
        <fullName evidence="1 22">Lipid A export ATP-binding/permease protein MsbA</fullName>
    </alternativeName>
    <alternativeName>
        <fullName evidence="20">Lipid flippase</fullName>
    </alternativeName>
</protein>
<dbReference type="EC" id="7.5.2.6" evidence="1 4 10 16"/>
<dbReference type="EMBL" id="Z11796">
    <property type="protein sequence ID" value="CAA77839.1"/>
    <property type="molecule type" value="Genomic_DNA"/>
</dbReference>
<dbReference type="EMBL" id="U00096">
    <property type="protein sequence ID" value="AAC74000.1"/>
    <property type="molecule type" value="Genomic_DNA"/>
</dbReference>
<dbReference type="EMBL" id="AP009048">
    <property type="protein sequence ID" value="BAA35658.1"/>
    <property type="molecule type" value="Genomic_DNA"/>
</dbReference>
<dbReference type="PIR" id="C85617">
    <property type="entry name" value="C85617"/>
</dbReference>
<dbReference type="PIR" id="E90753">
    <property type="entry name" value="E90753"/>
</dbReference>
<dbReference type="PIR" id="S27998">
    <property type="entry name" value="S27998"/>
</dbReference>
<dbReference type="RefSeq" id="NP_415434.1">
    <property type="nucleotide sequence ID" value="NC_000913.3"/>
</dbReference>
<dbReference type="RefSeq" id="WP_000551270.1">
    <property type="nucleotide sequence ID" value="NZ_STEB01000006.1"/>
</dbReference>
<dbReference type="PDB" id="3B5W">
    <property type="method" value="X-ray"/>
    <property type="resolution" value="5.30 A"/>
    <property type="chains" value="A/B/C/D/E/F/G/H=1-582"/>
</dbReference>
<dbReference type="PDB" id="5TTP">
    <property type="method" value="EM"/>
    <property type="resolution" value="4.80 A"/>
    <property type="chains" value="A/B=1-582"/>
</dbReference>
<dbReference type="PDB" id="5TV4">
    <property type="method" value="EM"/>
    <property type="resolution" value="4.20 A"/>
    <property type="chains" value="A/B=1-582"/>
</dbReference>
<dbReference type="PDB" id="6UZ2">
    <property type="method" value="EM"/>
    <property type="resolution" value="4.20 A"/>
    <property type="chains" value="A/B=1-582"/>
</dbReference>
<dbReference type="PDB" id="6UZL">
    <property type="method" value="EM"/>
    <property type="resolution" value="4.40 A"/>
    <property type="chains" value="A/B=1-582"/>
</dbReference>
<dbReference type="PDB" id="7BCW">
    <property type="method" value="EM"/>
    <property type="resolution" value="3.50 A"/>
    <property type="chains" value="A/B=1-582"/>
</dbReference>
<dbReference type="PDB" id="7NDF">
    <property type="method" value="X-ray"/>
    <property type="resolution" value="2.10 A"/>
    <property type="chains" value="A/B=340-582"/>
</dbReference>
<dbReference type="PDB" id="7PH2">
    <property type="method" value="EM"/>
    <property type="resolution" value="3.70 A"/>
    <property type="chains" value="A/B=1-582"/>
</dbReference>
<dbReference type="PDB" id="7PH3">
    <property type="method" value="EM"/>
    <property type="resolution" value="2.80 A"/>
    <property type="chains" value="A/B=1-582"/>
</dbReference>
<dbReference type="PDB" id="7PH4">
    <property type="method" value="EM"/>
    <property type="resolution" value="2.80 A"/>
    <property type="chains" value="A/B=1-582"/>
</dbReference>
<dbReference type="PDB" id="7PH7">
    <property type="method" value="EM"/>
    <property type="resolution" value="4.10 A"/>
    <property type="chains" value="A/B=1-582"/>
</dbReference>
<dbReference type="PDB" id="7SEL">
    <property type="method" value="X-ray"/>
    <property type="resolution" value="2.98 A"/>
    <property type="chains" value="A/B=2-582"/>
</dbReference>
<dbReference type="PDB" id="8DHY">
    <property type="method" value="X-ray"/>
    <property type="resolution" value="2.15 A"/>
    <property type="chains" value="A=381-528"/>
</dbReference>
<dbReference type="PDB" id="8DMM">
    <property type="method" value="EM"/>
    <property type="resolution" value="3.47 A"/>
    <property type="chains" value="A/B=2-582"/>
</dbReference>
<dbReference type="PDB" id="8DMO">
    <property type="method" value="EM"/>
    <property type="resolution" value="3.90 A"/>
    <property type="chains" value="A/B=2-582"/>
</dbReference>
<dbReference type="PDB" id="8TSO">
    <property type="method" value="EM"/>
    <property type="resolution" value="2.68 A"/>
    <property type="chains" value="A/B=2-582"/>
</dbReference>
<dbReference type="PDB" id="8TSP">
    <property type="method" value="EM"/>
    <property type="resolution" value="3.90 A"/>
    <property type="chains" value="A/B=2-582"/>
</dbReference>
<dbReference type="PDB" id="8TSQ">
    <property type="method" value="EM"/>
    <property type="resolution" value="3.60 A"/>
    <property type="chains" value="A/B=2-582"/>
</dbReference>
<dbReference type="PDB" id="8TSR">
    <property type="method" value="EM"/>
    <property type="resolution" value="3.90 A"/>
    <property type="chains" value="A/B=2-582"/>
</dbReference>
<dbReference type="PDB" id="8TSS">
    <property type="method" value="EM"/>
    <property type="resolution" value="3.70 A"/>
    <property type="chains" value="A/B=2-582"/>
</dbReference>
<dbReference type="PDBsum" id="3B5W"/>
<dbReference type="PDBsum" id="5TTP"/>
<dbReference type="PDBsum" id="5TV4"/>
<dbReference type="PDBsum" id="6UZ2"/>
<dbReference type="PDBsum" id="6UZL"/>
<dbReference type="PDBsum" id="7BCW"/>
<dbReference type="PDBsum" id="7NDF"/>
<dbReference type="PDBsum" id="7PH2"/>
<dbReference type="PDBsum" id="7PH3"/>
<dbReference type="PDBsum" id="7PH4"/>
<dbReference type="PDBsum" id="7PH7"/>
<dbReference type="PDBsum" id="7SEL"/>
<dbReference type="PDBsum" id="8DHY"/>
<dbReference type="PDBsum" id="8DMM"/>
<dbReference type="PDBsum" id="8DMO"/>
<dbReference type="PDBsum" id="8TSO"/>
<dbReference type="PDBsum" id="8TSP"/>
<dbReference type="PDBsum" id="8TSQ"/>
<dbReference type="PDBsum" id="8TSR"/>
<dbReference type="PDBsum" id="8TSS"/>
<dbReference type="EMDB" id="EMD-12145"/>
<dbReference type="EMDB" id="EMD-13404"/>
<dbReference type="EMDB" id="EMD-13405"/>
<dbReference type="EMDB" id="EMD-13406"/>
<dbReference type="SASBDB" id="P60752"/>
<dbReference type="SMR" id="P60752"/>
<dbReference type="BioGRID" id="4260013">
    <property type="interactions" value="297"/>
</dbReference>
<dbReference type="ComplexPortal" id="CPX-2116">
    <property type="entry name" value="MsbA transporter complex"/>
</dbReference>
<dbReference type="DIP" id="DIP-36229N"/>
<dbReference type="FunCoup" id="P60752">
    <property type="interactions" value="769"/>
</dbReference>
<dbReference type="IntAct" id="P60752">
    <property type="interactions" value="2"/>
</dbReference>
<dbReference type="STRING" id="511145.b0914"/>
<dbReference type="TCDB" id="3.A.1.106.1">
    <property type="family name" value="the atp-binding cassette (abc) superfamily"/>
</dbReference>
<dbReference type="jPOST" id="P60752"/>
<dbReference type="PaxDb" id="511145-b0914"/>
<dbReference type="EnsemblBacteria" id="AAC74000">
    <property type="protein sequence ID" value="AAC74000"/>
    <property type="gene ID" value="b0914"/>
</dbReference>
<dbReference type="GeneID" id="75205316"/>
<dbReference type="GeneID" id="945530"/>
<dbReference type="KEGG" id="ecj:JW0897"/>
<dbReference type="KEGG" id="eco:b0914"/>
<dbReference type="KEGG" id="ecoc:C3026_05630"/>
<dbReference type="PATRIC" id="fig|1411691.4.peg.1362"/>
<dbReference type="EchoBASE" id="EB0608"/>
<dbReference type="eggNOG" id="COG1132">
    <property type="taxonomic scope" value="Bacteria"/>
</dbReference>
<dbReference type="HOGENOM" id="CLU_000604_84_3_6"/>
<dbReference type="InParanoid" id="P60752"/>
<dbReference type="OMA" id="MYTGHTL"/>
<dbReference type="OrthoDB" id="9806127at2"/>
<dbReference type="PhylomeDB" id="P60752"/>
<dbReference type="BioCyc" id="EcoCyc:EG10613-MONOMER"/>
<dbReference type="BioCyc" id="MetaCyc:EG10613-MONOMER"/>
<dbReference type="BRENDA" id="7.5.2.6">
    <property type="organism ID" value="2026"/>
</dbReference>
<dbReference type="BRENDA" id="7.6.2.1">
    <property type="organism ID" value="2026"/>
</dbReference>
<dbReference type="SABIO-RK" id="P60752"/>
<dbReference type="EvolutionaryTrace" id="P60752"/>
<dbReference type="PRO" id="PR:P60752"/>
<dbReference type="Proteomes" id="UP000000625">
    <property type="component" value="Chromosome"/>
</dbReference>
<dbReference type="GO" id="GO:0043190">
    <property type="term" value="C:ATP-binding cassette (ABC) transporter complex"/>
    <property type="evidence" value="ECO:0000314"/>
    <property type="project" value="EcoCyc"/>
</dbReference>
<dbReference type="GO" id="GO:0016020">
    <property type="term" value="C:membrane"/>
    <property type="evidence" value="ECO:0007005"/>
    <property type="project" value="UniProtKB"/>
</dbReference>
<dbReference type="GO" id="GO:1990199">
    <property type="term" value="C:MsbA transporter complex"/>
    <property type="evidence" value="ECO:0000353"/>
    <property type="project" value="ComplexPortal"/>
</dbReference>
<dbReference type="GO" id="GO:0005886">
    <property type="term" value="C:plasma membrane"/>
    <property type="evidence" value="ECO:0000314"/>
    <property type="project" value="EcoCyc"/>
</dbReference>
<dbReference type="GO" id="GO:0008559">
    <property type="term" value="F:ABC-type xenobiotic transporter activity"/>
    <property type="evidence" value="ECO:0000314"/>
    <property type="project" value="EcoCyc"/>
</dbReference>
<dbReference type="GO" id="GO:0005524">
    <property type="term" value="F:ATP binding"/>
    <property type="evidence" value="ECO:0000314"/>
    <property type="project" value="EcoCyc"/>
</dbReference>
<dbReference type="GO" id="GO:0016887">
    <property type="term" value="F:ATP hydrolysis activity"/>
    <property type="evidence" value="ECO:0007669"/>
    <property type="project" value="InterPro"/>
</dbReference>
<dbReference type="GO" id="GO:0034040">
    <property type="term" value="F:ATPase-coupled lipid transmembrane transporter activity"/>
    <property type="evidence" value="ECO:0000314"/>
    <property type="project" value="EcoliWiki"/>
</dbReference>
<dbReference type="GO" id="GO:0042802">
    <property type="term" value="F:identical protein binding"/>
    <property type="evidence" value="ECO:0000353"/>
    <property type="project" value="IntAct"/>
</dbReference>
<dbReference type="GO" id="GO:0008289">
    <property type="term" value="F:lipid binding"/>
    <property type="evidence" value="ECO:0000314"/>
    <property type="project" value="EcoliWiki"/>
</dbReference>
<dbReference type="GO" id="GO:0015437">
    <property type="term" value="F:lipopolysaccharide floppase activity"/>
    <property type="evidence" value="ECO:0000314"/>
    <property type="project" value="EcoCyc"/>
</dbReference>
<dbReference type="GO" id="GO:0034204">
    <property type="term" value="P:lipid translocation"/>
    <property type="evidence" value="ECO:0000314"/>
    <property type="project" value="EcoCyc"/>
</dbReference>
<dbReference type="GO" id="GO:0006869">
    <property type="term" value="P:lipid transport"/>
    <property type="evidence" value="ECO:0000315"/>
    <property type="project" value="ComplexPortal"/>
</dbReference>
<dbReference type="GO" id="GO:0015920">
    <property type="term" value="P:lipopolysaccharide transport"/>
    <property type="evidence" value="ECO:0000315"/>
    <property type="project" value="ComplexPortal"/>
</dbReference>
<dbReference type="GO" id="GO:0055085">
    <property type="term" value="P:transmembrane transport"/>
    <property type="evidence" value="ECO:0000318"/>
    <property type="project" value="GO_Central"/>
</dbReference>
<dbReference type="CDD" id="cd18552">
    <property type="entry name" value="ABC_6TM_MsbA_like"/>
    <property type="match status" value="1"/>
</dbReference>
<dbReference type="CDD" id="cd03251">
    <property type="entry name" value="ABCC_MsbA"/>
    <property type="match status" value="1"/>
</dbReference>
<dbReference type="FunFam" id="1.20.1560.10:FF:000008">
    <property type="entry name" value="Lipid A export ATP-binding/permease protein MsbA"/>
    <property type="match status" value="1"/>
</dbReference>
<dbReference type="FunFam" id="3.40.50.300:FF:000140">
    <property type="entry name" value="Lipid A export ATP-binding/permease protein MsbA"/>
    <property type="match status" value="1"/>
</dbReference>
<dbReference type="Gene3D" id="1.20.1560.10">
    <property type="entry name" value="ABC transporter type 1, transmembrane domain"/>
    <property type="match status" value="1"/>
</dbReference>
<dbReference type="Gene3D" id="3.40.50.300">
    <property type="entry name" value="P-loop containing nucleotide triphosphate hydrolases"/>
    <property type="match status" value="1"/>
</dbReference>
<dbReference type="InterPro" id="IPR003593">
    <property type="entry name" value="AAA+_ATPase"/>
</dbReference>
<dbReference type="InterPro" id="IPR011527">
    <property type="entry name" value="ABC1_TM_dom"/>
</dbReference>
<dbReference type="InterPro" id="IPR036640">
    <property type="entry name" value="ABC1_TM_sf"/>
</dbReference>
<dbReference type="InterPro" id="IPR003439">
    <property type="entry name" value="ABC_transporter-like_ATP-bd"/>
</dbReference>
<dbReference type="InterPro" id="IPR017871">
    <property type="entry name" value="ABC_transporter-like_CS"/>
</dbReference>
<dbReference type="InterPro" id="IPR011917">
    <property type="entry name" value="ABC_transpr_lipidA"/>
</dbReference>
<dbReference type="InterPro" id="IPR027417">
    <property type="entry name" value="P-loop_NTPase"/>
</dbReference>
<dbReference type="InterPro" id="IPR039421">
    <property type="entry name" value="Type_1_exporter"/>
</dbReference>
<dbReference type="NCBIfam" id="TIGR02203">
    <property type="entry name" value="MsbA_lipidA"/>
    <property type="match status" value="1"/>
</dbReference>
<dbReference type="NCBIfam" id="NF008381">
    <property type="entry name" value="PRK11176.1"/>
    <property type="match status" value="1"/>
</dbReference>
<dbReference type="PANTHER" id="PTHR43394:SF1">
    <property type="entry name" value="ATP-BINDING CASSETTE SUB-FAMILY B MEMBER 10, MITOCHONDRIAL"/>
    <property type="match status" value="1"/>
</dbReference>
<dbReference type="PANTHER" id="PTHR43394">
    <property type="entry name" value="ATP-DEPENDENT PERMEASE MDL1, MITOCHONDRIAL"/>
    <property type="match status" value="1"/>
</dbReference>
<dbReference type="Pfam" id="PF00664">
    <property type="entry name" value="ABC_membrane"/>
    <property type="match status" value="1"/>
</dbReference>
<dbReference type="Pfam" id="PF00005">
    <property type="entry name" value="ABC_tran"/>
    <property type="match status" value="1"/>
</dbReference>
<dbReference type="SMART" id="SM00382">
    <property type="entry name" value="AAA"/>
    <property type="match status" value="1"/>
</dbReference>
<dbReference type="SUPFAM" id="SSF90123">
    <property type="entry name" value="ABC transporter transmembrane region"/>
    <property type="match status" value="1"/>
</dbReference>
<dbReference type="SUPFAM" id="SSF52540">
    <property type="entry name" value="P-loop containing nucleoside triphosphate hydrolases"/>
    <property type="match status" value="1"/>
</dbReference>
<dbReference type="PROSITE" id="PS50929">
    <property type="entry name" value="ABC_TM1F"/>
    <property type="match status" value="1"/>
</dbReference>
<dbReference type="PROSITE" id="PS00211">
    <property type="entry name" value="ABC_TRANSPORTER_1"/>
    <property type="match status" value="1"/>
</dbReference>
<dbReference type="PROSITE" id="PS50893">
    <property type="entry name" value="ABC_TRANSPORTER_2"/>
    <property type="match status" value="1"/>
</dbReference>
<dbReference type="PROSITE" id="PS51239">
    <property type="entry name" value="MSBA"/>
    <property type="match status" value="1"/>
</dbReference>
<accession>P60752</accession>
<accession>P27299</accession>
<organism>
    <name type="scientific">Escherichia coli (strain K12)</name>
    <dbReference type="NCBI Taxonomy" id="83333"/>
    <lineage>
        <taxon>Bacteria</taxon>
        <taxon>Pseudomonadati</taxon>
        <taxon>Pseudomonadota</taxon>
        <taxon>Gammaproteobacteria</taxon>
        <taxon>Enterobacterales</taxon>
        <taxon>Enterobacteriaceae</taxon>
        <taxon>Escherichia</taxon>
    </lineage>
</organism>
<keyword id="KW-0002">3D-structure</keyword>
<keyword id="KW-0067">ATP-binding</keyword>
<keyword id="KW-0997">Cell inner membrane</keyword>
<keyword id="KW-1003">Cell membrane</keyword>
<keyword id="KW-0445">Lipid transport</keyword>
<keyword id="KW-0472">Membrane</keyword>
<keyword id="KW-0547">Nucleotide-binding</keyword>
<keyword id="KW-1185">Reference proteome</keyword>
<keyword id="KW-1278">Translocase</keyword>
<keyword id="KW-0812">Transmembrane</keyword>
<keyword id="KW-1133">Transmembrane helix</keyword>
<keyword id="KW-0813">Transport</keyword>
<sequence>MHNDKDLSTWQTFRRLWPTIAPFKAGLIVAGVALILNAASDTFMLSLLKPLLDDGFGKTDRSVLVWMPLVVIGLMILRGITSYVSSYCISWVSGKVVMTMRRRLFGHMMGMPVSFFDKQSTGTLLSRITYDSEQVASSSSGALITVVREGASIIGLFIMMFYYSWQLSIILIVLAPIVSIAIRVVSKRFRNISKNMQNTMGQVTTSAEQMLKGHKEVLIFGGQEVETKRFDKVSNRMRLQGMKMVSASSISDPIIQLIASLALAFVLYAASFPSVMDSLTAGTITVVFSSMIALMRPLKSLTNVNAQFQRGMAACQTLFTILDSEQEKDEGKRVIERATGDVEFRNVTFTYPGRDVPALRNINLKIPAGKTVALVGRSGSGKSTIASLITRFYDIDEGEILMDGHDLREYTLASLRNQVALVSQNVHLFNDTVANNIAYARTEQYSREQIEEAARMAYAMDFINKMDNGLDTVIGENGVLLSGGQRQRIAIARALLRDSPILILDEATSALDTESERAIQAALDELQKNRTSLVIAHRLSTIEKADEIVVVEDGVIVERGTHNDLLEHRGVYAQLHKMQFGQ</sequence>
<evidence type="ECO:0000255" key="1">
    <source>
        <dbReference type="HAMAP-Rule" id="MF_01703"/>
    </source>
</evidence>
<evidence type="ECO:0000269" key="2">
    <source>
    </source>
</evidence>
<evidence type="ECO:0000269" key="3">
    <source>
    </source>
</evidence>
<evidence type="ECO:0000269" key="4">
    <source>
    </source>
</evidence>
<evidence type="ECO:0000269" key="5">
    <source>
    </source>
</evidence>
<evidence type="ECO:0000269" key="6">
    <source>
    </source>
</evidence>
<evidence type="ECO:0000269" key="7">
    <source>
    </source>
</evidence>
<evidence type="ECO:0000269" key="8">
    <source>
    </source>
</evidence>
<evidence type="ECO:0000269" key="9">
    <source>
    </source>
</evidence>
<evidence type="ECO:0000269" key="10">
    <source>
    </source>
</evidence>
<evidence type="ECO:0000269" key="11">
    <source>
    </source>
</evidence>
<evidence type="ECO:0000269" key="12">
    <source>
    </source>
</evidence>
<evidence type="ECO:0000269" key="13">
    <source>
    </source>
</evidence>
<evidence type="ECO:0000269" key="14">
    <source>
    </source>
</evidence>
<evidence type="ECO:0000269" key="15">
    <source>
    </source>
</evidence>
<evidence type="ECO:0000269" key="16">
    <source>
    </source>
</evidence>
<evidence type="ECO:0000269" key="17">
    <source>
    </source>
</evidence>
<evidence type="ECO:0000269" key="18">
    <source>
    </source>
</evidence>
<evidence type="ECO:0000269" key="19">
    <source>
    </source>
</evidence>
<evidence type="ECO:0000303" key="20">
    <source>
    </source>
</evidence>
<evidence type="ECO:0000303" key="21">
    <source>
    </source>
</evidence>
<evidence type="ECO:0000305" key="22"/>
<evidence type="ECO:0007744" key="23">
    <source>
        <dbReference type="PDB" id="3B5W"/>
    </source>
</evidence>
<evidence type="ECO:0007744" key="24">
    <source>
        <dbReference type="PDB" id="6UZ2"/>
    </source>
</evidence>
<evidence type="ECO:0007744" key="25">
    <source>
        <dbReference type="PDB" id="6UZL"/>
    </source>
</evidence>
<evidence type="ECO:0007829" key="26">
    <source>
        <dbReference type="PDB" id="7NDF"/>
    </source>
</evidence>
<evidence type="ECO:0007829" key="27">
    <source>
        <dbReference type="PDB" id="7PH3"/>
    </source>
</evidence>
<evidence type="ECO:0007829" key="28">
    <source>
        <dbReference type="PDB" id="8TSO"/>
    </source>
</evidence>
<gene>
    <name evidence="1 21" type="primary">msbA</name>
    <name type="ordered locus">b0914</name>
    <name type="ordered locus">JW0897</name>
</gene>
<name>MSBA_ECOLI</name>